<comment type="function">
    <text evidence="1">Involved in transcription antitermination. Required for transcription of ribosomal RNA (rRNA) genes. Binds specifically to the boxA antiterminator sequence of the ribosomal RNA (rrn) operons.</text>
</comment>
<comment type="similarity">
    <text evidence="1">Belongs to the NusB family.</text>
</comment>
<accession>C3M9I9</accession>
<feature type="chain" id="PRO_1000192452" description="Transcription antitermination protein NusB">
    <location>
        <begin position="1"/>
        <end position="160"/>
    </location>
</feature>
<gene>
    <name evidence="1" type="primary">nusB</name>
    <name type="ordered locus">NGR_c09650</name>
</gene>
<dbReference type="EMBL" id="CP001389">
    <property type="protein sequence ID" value="ACP24755.1"/>
    <property type="molecule type" value="Genomic_DNA"/>
</dbReference>
<dbReference type="RefSeq" id="WP_012707539.1">
    <property type="nucleotide sequence ID" value="NC_012587.1"/>
</dbReference>
<dbReference type="RefSeq" id="YP_002825508.1">
    <property type="nucleotide sequence ID" value="NC_012587.1"/>
</dbReference>
<dbReference type="SMR" id="C3M9I9"/>
<dbReference type="STRING" id="394.NGR_c09650"/>
<dbReference type="KEGG" id="rhi:NGR_c09650"/>
<dbReference type="PATRIC" id="fig|394.7.peg.3786"/>
<dbReference type="eggNOG" id="COG0781">
    <property type="taxonomic scope" value="Bacteria"/>
</dbReference>
<dbReference type="HOGENOM" id="CLU_087843_4_0_5"/>
<dbReference type="OrthoDB" id="9797817at2"/>
<dbReference type="Proteomes" id="UP000001054">
    <property type="component" value="Chromosome"/>
</dbReference>
<dbReference type="GO" id="GO:0005829">
    <property type="term" value="C:cytosol"/>
    <property type="evidence" value="ECO:0007669"/>
    <property type="project" value="TreeGrafter"/>
</dbReference>
<dbReference type="GO" id="GO:0003723">
    <property type="term" value="F:RNA binding"/>
    <property type="evidence" value="ECO:0007669"/>
    <property type="project" value="UniProtKB-UniRule"/>
</dbReference>
<dbReference type="GO" id="GO:0006353">
    <property type="term" value="P:DNA-templated transcription termination"/>
    <property type="evidence" value="ECO:0007669"/>
    <property type="project" value="UniProtKB-UniRule"/>
</dbReference>
<dbReference type="GO" id="GO:0031564">
    <property type="term" value="P:transcription antitermination"/>
    <property type="evidence" value="ECO:0007669"/>
    <property type="project" value="UniProtKB-KW"/>
</dbReference>
<dbReference type="Gene3D" id="1.10.940.10">
    <property type="entry name" value="NusB-like"/>
    <property type="match status" value="1"/>
</dbReference>
<dbReference type="HAMAP" id="MF_00073">
    <property type="entry name" value="NusB"/>
    <property type="match status" value="1"/>
</dbReference>
<dbReference type="InterPro" id="IPR035926">
    <property type="entry name" value="NusB-like_sf"/>
</dbReference>
<dbReference type="InterPro" id="IPR011605">
    <property type="entry name" value="NusB_fam"/>
</dbReference>
<dbReference type="InterPro" id="IPR006027">
    <property type="entry name" value="NusB_RsmB_TIM44"/>
</dbReference>
<dbReference type="NCBIfam" id="TIGR01951">
    <property type="entry name" value="nusB"/>
    <property type="match status" value="1"/>
</dbReference>
<dbReference type="PANTHER" id="PTHR11078:SF3">
    <property type="entry name" value="ANTITERMINATION NUSB DOMAIN-CONTAINING PROTEIN"/>
    <property type="match status" value="1"/>
</dbReference>
<dbReference type="PANTHER" id="PTHR11078">
    <property type="entry name" value="N UTILIZATION SUBSTANCE PROTEIN B-RELATED"/>
    <property type="match status" value="1"/>
</dbReference>
<dbReference type="Pfam" id="PF01029">
    <property type="entry name" value="NusB"/>
    <property type="match status" value="1"/>
</dbReference>
<dbReference type="SUPFAM" id="SSF48013">
    <property type="entry name" value="NusB-like"/>
    <property type="match status" value="1"/>
</dbReference>
<sequence length="160" mass="17850">MTNTPSDQPLKQANQRGAARLAAVQALYQMEIGGTGVLEIVAEFEAHRLGQELDGETYLKADASWFRSIVSGVVRDQRKLDPLIGSALQDDWALSRLDSTVRAILRAGTFELLERKDVPVAVIVTEYVEIAKAFFEDEEPKLVNAVLDRIAKQIRGERRK</sequence>
<name>NUSB_SINFN</name>
<keyword id="KW-1185">Reference proteome</keyword>
<keyword id="KW-0694">RNA-binding</keyword>
<keyword id="KW-0804">Transcription</keyword>
<keyword id="KW-0889">Transcription antitermination</keyword>
<keyword id="KW-0805">Transcription regulation</keyword>
<reference key="1">
    <citation type="journal article" date="2009" name="Appl. Environ. Microbiol.">
        <title>Rhizobium sp. strain NGR234 possesses a remarkable number of secretion systems.</title>
        <authorList>
            <person name="Schmeisser C."/>
            <person name="Liesegang H."/>
            <person name="Krysciak D."/>
            <person name="Bakkou N."/>
            <person name="Le Quere A."/>
            <person name="Wollherr A."/>
            <person name="Heinemeyer I."/>
            <person name="Morgenstern B."/>
            <person name="Pommerening-Roeser A."/>
            <person name="Flores M."/>
            <person name="Palacios R."/>
            <person name="Brenner S."/>
            <person name="Gottschalk G."/>
            <person name="Schmitz R.A."/>
            <person name="Broughton W.J."/>
            <person name="Perret X."/>
            <person name="Strittmatter A.W."/>
            <person name="Streit W.R."/>
        </authorList>
    </citation>
    <scope>NUCLEOTIDE SEQUENCE [LARGE SCALE GENOMIC DNA]</scope>
    <source>
        <strain>NBRC 101917 / NGR234</strain>
    </source>
</reference>
<proteinExistence type="inferred from homology"/>
<organism>
    <name type="scientific">Sinorhizobium fredii (strain NBRC 101917 / NGR234)</name>
    <dbReference type="NCBI Taxonomy" id="394"/>
    <lineage>
        <taxon>Bacteria</taxon>
        <taxon>Pseudomonadati</taxon>
        <taxon>Pseudomonadota</taxon>
        <taxon>Alphaproteobacteria</taxon>
        <taxon>Hyphomicrobiales</taxon>
        <taxon>Rhizobiaceae</taxon>
        <taxon>Sinorhizobium/Ensifer group</taxon>
        <taxon>Sinorhizobium</taxon>
    </lineage>
</organism>
<evidence type="ECO:0000255" key="1">
    <source>
        <dbReference type="HAMAP-Rule" id="MF_00073"/>
    </source>
</evidence>
<protein>
    <recommendedName>
        <fullName evidence="1">Transcription antitermination protein NusB</fullName>
    </recommendedName>
    <alternativeName>
        <fullName evidence="1">Antitermination factor NusB</fullName>
    </alternativeName>
</protein>